<name>NTE1_COCIM</name>
<protein>
    <recommendedName>
        <fullName>Lysophospholipase NTE1</fullName>
        <ecNumber>3.1.1.5</ecNumber>
    </recommendedName>
    <alternativeName>
        <fullName>Intracellular phospholipase B</fullName>
    </alternativeName>
    <alternativeName>
        <fullName>Neuropathy target esterase homolog</fullName>
    </alternativeName>
</protein>
<keyword id="KW-0256">Endoplasmic reticulum</keyword>
<keyword id="KW-0378">Hydrolase</keyword>
<keyword id="KW-0442">Lipid degradation</keyword>
<keyword id="KW-0443">Lipid metabolism</keyword>
<keyword id="KW-0472">Membrane</keyword>
<keyword id="KW-1185">Reference proteome</keyword>
<keyword id="KW-0677">Repeat</keyword>
<keyword id="KW-0812">Transmembrane</keyword>
<keyword id="KW-1133">Transmembrane helix</keyword>
<gene>
    <name type="primary">NTE1</name>
    <name type="ORF">CIMG_08886</name>
</gene>
<comment type="function">
    <text evidence="1">Intracellular phospholipase B that catalyzes the double deacylation of phosphatidylcholine (PC) to glycerophosphocholine (GroPCho). Plays an important role in membrane lipid homeostasis. Responsible for the rapid PC turnover in response to inositol, elevated temperatures, or when choline is present in the growth medium (By similarity).</text>
</comment>
<comment type="catalytic activity">
    <reaction>
        <text>a 1-acyl-sn-glycero-3-phosphocholine + H2O = sn-glycerol 3-phosphocholine + a fatty acid + H(+)</text>
        <dbReference type="Rhea" id="RHEA:15177"/>
        <dbReference type="ChEBI" id="CHEBI:15377"/>
        <dbReference type="ChEBI" id="CHEBI:15378"/>
        <dbReference type="ChEBI" id="CHEBI:16870"/>
        <dbReference type="ChEBI" id="CHEBI:28868"/>
        <dbReference type="ChEBI" id="CHEBI:58168"/>
        <dbReference type="EC" id="3.1.1.5"/>
    </reaction>
</comment>
<comment type="activity regulation">
    <text evidence="1">Inhibited by organophosphorus esters.</text>
</comment>
<comment type="subcellular location">
    <subcellularLocation>
        <location evidence="1">Endoplasmic reticulum membrane</location>
        <topology evidence="1">Multi-pass membrane protein</topology>
    </subcellularLocation>
</comment>
<comment type="similarity">
    <text evidence="5">Belongs to the NTE family.</text>
</comment>
<evidence type="ECO:0000250" key="1"/>
<evidence type="ECO:0000255" key="2"/>
<evidence type="ECO:0000255" key="3">
    <source>
        <dbReference type="PROSITE-ProRule" id="PRU01161"/>
    </source>
</evidence>
<evidence type="ECO:0000256" key="4">
    <source>
        <dbReference type="SAM" id="MobiDB-lite"/>
    </source>
</evidence>
<evidence type="ECO:0000305" key="5"/>
<proteinExistence type="inferred from homology"/>
<reference key="1">
    <citation type="journal article" date="2009" name="Genome Res.">
        <title>Comparative genomic analyses of the human fungal pathogens Coccidioides and their relatives.</title>
        <authorList>
            <person name="Sharpton T.J."/>
            <person name="Stajich J.E."/>
            <person name="Rounsley S.D."/>
            <person name="Gardner M.J."/>
            <person name="Wortman J.R."/>
            <person name="Jordar V.S."/>
            <person name="Maiti R."/>
            <person name="Kodira C.D."/>
            <person name="Neafsey D.E."/>
            <person name="Zeng Q."/>
            <person name="Hung C.-Y."/>
            <person name="McMahan C."/>
            <person name="Muszewska A."/>
            <person name="Grynberg M."/>
            <person name="Mandel M.A."/>
            <person name="Kellner E.M."/>
            <person name="Barker B.M."/>
            <person name="Galgiani J.N."/>
            <person name="Orbach M.J."/>
            <person name="Kirkland T.N."/>
            <person name="Cole G.T."/>
            <person name="Henn M.R."/>
            <person name="Birren B.W."/>
            <person name="Taylor J.W."/>
        </authorList>
    </citation>
    <scope>NUCLEOTIDE SEQUENCE [LARGE SCALE GENOMIC DNA]</scope>
    <source>
        <strain>RS</strain>
    </source>
</reference>
<reference key="2">
    <citation type="journal article" date="2010" name="Genome Res.">
        <title>Population genomic sequencing of Coccidioides fungi reveals recent hybridization and transposon control.</title>
        <authorList>
            <person name="Neafsey D.E."/>
            <person name="Barker B.M."/>
            <person name="Sharpton T.J."/>
            <person name="Stajich J.E."/>
            <person name="Park D.J."/>
            <person name="Whiston E."/>
            <person name="Hung C.-Y."/>
            <person name="McMahan C."/>
            <person name="White J."/>
            <person name="Sykes S."/>
            <person name="Heiman D."/>
            <person name="Young S."/>
            <person name="Zeng Q."/>
            <person name="Abouelleil A."/>
            <person name="Aftuck L."/>
            <person name="Bessette D."/>
            <person name="Brown A."/>
            <person name="FitzGerald M."/>
            <person name="Lui A."/>
            <person name="Macdonald J.P."/>
            <person name="Priest M."/>
            <person name="Orbach M.J."/>
            <person name="Galgiani J.N."/>
            <person name="Kirkland T.N."/>
            <person name="Cole G.T."/>
            <person name="Birren B.W."/>
            <person name="Henn M.R."/>
            <person name="Taylor J.W."/>
            <person name="Rounsley S.D."/>
        </authorList>
    </citation>
    <scope>GENOME REANNOTATION</scope>
    <source>
        <strain>RS</strain>
    </source>
</reference>
<sequence length="1575" mass="173384">MNLTTTMPAAVAPDPPAQLAVSSRSLSDSSDAAGASRTSSSCRASSPSHCPTHAWNPDPPPSSLQPVFSFSPSLPPPCPSPAISSCPPNTLSPPNLLQGIVSQLAMASYIGRLLLYLFQVVPSLLYWAITFTTITVPTALFTLFSMSLTFTMNFTTLLIIVLLLVSTVSWFIRYRFLNIYSRLPPEPQRKEPEIDLFPDSQDGDSKPGLSNYLDEFLSAIKVFGYLERPVFHELTRTMQTRKLIAGETLLLEEEKGFCLVVDGLVQIFVKSIQERDDDRDGWQLDEAVEDSVDEDDEIRRRGHQGYQLLTEVKNGASMSSLFSILSLFSEDIKLRHNEDMESSSSSFNNVPAPDSNPMSPALLLESPTRVSFPDQRDIPTQPSADTLPKVSPLALEGSPGPFEHDPKPRGHRRKRPSRPKRAKSVHPDILARAMVDTTIAIIPASAFRRLTRVYPKATAHIIQVILTRLQRVTFATAHSYLGLTTEVLSIEQQMTKYTSFDLPNHLRGAALDKLKSKFTKEKERLGPEDGTKGIALHNPALNRRRRSSSSLRKDAALHAKLTAVRGKGSASNPIRYGDHESTGVSPGDLLSTIQLSRFGPRYGSERLNGRSVFYDAASGMKTPAGGPPSPLATPGQPLFRFPAQNVTFQRQDSLDQDAIFRESILDCMMKALGLTGSTQDALRKTHNSGDASPHLVSYDSRRQKAVFNNAFGFIDPYDGFGDGDSESLMSMSVTSAGGTSPVHNLRTELQDEIEIVYFPKGSVLIEQGEHNPGLYYVIDGFLDVGIPVNEKGEDLIGSSRRPTAEDILLPITGNASRVSSTLGTAHNQRKKASRRSLYMVKPGGVEGYIGSITSYRSFTDVTAKTDVYVGFLPRAVLERIADRYPLVMLTMAKRLTTVLPRLILHIDFALEWVQVNAGQVIHHQGDESDAIYIVLNGRLRAVLDKGDGKVSVLGEYGQGDSVGELEVMTESTRPGTLHAIRDTELAKFPRTLFNSLAQEHPGITIQISKLIAQRMRHIIDNPLEKGSDKGSPDSAKPTTSTLNLRTVAVLPVTAGIPVVEFGNRLLNAFNQVGVTNGVTSLHQADILNHLGRHAFSKMGKLKLAQYLADLEERYGMVLYVGDTSVNAPWTQTCIAQADCILLVALAEGSPAIGEYERFLLGMKTTARKELVLLHAERYSQPGLTRQWLKNRMWINGGHHHIQMAFRLTAEPVHPETKRLGAVLKQRVQVIQAEIQKYTSRRIRQTPVYSTSTPVKGDFHRLARRLCGKSVGLVLGGGGARGIAHIGVIKALEEAGIPIDIIGGTSIGSFIGALYARDADVVPAYGRAKKFSGRMASMWRFALDLTYPSASYTTGHEFNRGIFKAFGNSHIEDFWLEFYCNTTNISKSRLEFHSSGYAWRYVRASMSLAGLIPPLCDEGNMLLDGGYVDNLTVARMKSLGADVIFAVDVGAIDDNTPQGYGDSLSGFWALVNRWNPFSSLPNPPTLSEIQARLAYVSSVDALERAKSTPGCLYMRPPIDAFGTLDFAKFDEIYQVGYKFGKEFLDRLKNEGGLPIQEETEEKKKLRRTMAPRRASI</sequence>
<dbReference type="EC" id="3.1.1.5"/>
<dbReference type="EMBL" id="GG704913">
    <property type="protein sequence ID" value="EAS30140.3"/>
    <property type="molecule type" value="Genomic_DNA"/>
</dbReference>
<dbReference type="RefSeq" id="XP_001241723.2">
    <property type="nucleotide sequence ID" value="XM_001241722.2"/>
</dbReference>
<dbReference type="SMR" id="Q1DLC7"/>
<dbReference type="FunCoup" id="Q1DLC7">
    <property type="interactions" value="111"/>
</dbReference>
<dbReference type="STRING" id="246410.Q1DLC7"/>
<dbReference type="GeneID" id="4560690"/>
<dbReference type="KEGG" id="cim:CIMG_08886"/>
<dbReference type="VEuPathDB" id="FungiDB:CIMG_08886"/>
<dbReference type="InParanoid" id="Q1DLC7"/>
<dbReference type="OMA" id="SSGYVWR"/>
<dbReference type="OrthoDB" id="421051at2759"/>
<dbReference type="Proteomes" id="UP000001261">
    <property type="component" value="Unassembled WGS sequence"/>
</dbReference>
<dbReference type="GO" id="GO:0005789">
    <property type="term" value="C:endoplasmic reticulum membrane"/>
    <property type="evidence" value="ECO:0007669"/>
    <property type="project" value="UniProtKB-SubCell"/>
</dbReference>
<dbReference type="GO" id="GO:0004622">
    <property type="term" value="F:lysophospholipase activity"/>
    <property type="evidence" value="ECO:0007669"/>
    <property type="project" value="UniProtKB-EC"/>
</dbReference>
<dbReference type="GO" id="GO:0016042">
    <property type="term" value="P:lipid catabolic process"/>
    <property type="evidence" value="ECO:0007669"/>
    <property type="project" value="UniProtKB-KW"/>
</dbReference>
<dbReference type="GO" id="GO:0046470">
    <property type="term" value="P:phosphatidylcholine metabolic process"/>
    <property type="evidence" value="ECO:0007669"/>
    <property type="project" value="InterPro"/>
</dbReference>
<dbReference type="CDD" id="cd00038">
    <property type="entry name" value="CAP_ED"/>
    <property type="match status" value="2"/>
</dbReference>
<dbReference type="FunFam" id="2.60.120.10:FF:000062">
    <property type="entry name" value="Lysophospholipase NTE1"/>
    <property type="match status" value="1"/>
</dbReference>
<dbReference type="FunFam" id="3.40.1090.10:FF:000007">
    <property type="entry name" value="Lysophospholipase NTE1"/>
    <property type="match status" value="1"/>
</dbReference>
<dbReference type="FunFam" id="3.40.1090.10:FF:000018">
    <property type="entry name" value="Lysophospholipase NTE1"/>
    <property type="match status" value="1"/>
</dbReference>
<dbReference type="Gene3D" id="3.40.1090.10">
    <property type="entry name" value="Cytosolic phospholipase A2 catalytic domain"/>
    <property type="match status" value="2"/>
</dbReference>
<dbReference type="Gene3D" id="2.60.120.10">
    <property type="entry name" value="Jelly Rolls"/>
    <property type="match status" value="3"/>
</dbReference>
<dbReference type="InterPro" id="IPR016035">
    <property type="entry name" value="Acyl_Trfase/lysoPLipase"/>
</dbReference>
<dbReference type="InterPro" id="IPR000595">
    <property type="entry name" value="cNMP-bd_dom"/>
</dbReference>
<dbReference type="InterPro" id="IPR018490">
    <property type="entry name" value="cNMP-bd_dom_sf"/>
</dbReference>
<dbReference type="InterPro" id="IPR001423">
    <property type="entry name" value="LysoPLipase_patatin_CS"/>
</dbReference>
<dbReference type="InterPro" id="IPR050301">
    <property type="entry name" value="NTE"/>
</dbReference>
<dbReference type="InterPro" id="IPR056556">
    <property type="entry name" value="NTE1_P-loop_dom"/>
</dbReference>
<dbReference type="InterPro" id="IPR002641">
    <property type="entry name" value="PNPLA_dom"/>
</dbReference>
<dbReference type="InterPro" id="IPR014710">
    <property type="entry name" value="RmlC-like_jellyroll"/>
</dbReference>
<dbReference type="PANTHER" id="PTHR14226:SF29">
    <property type="entry name" value="NEUROPATHY TARGET ESTERASE SWS"/>
    <property type="match status" value="1"/>
</dbReference>
<dbReference type="PANTHER" id="PTHR14226">
    <property type="entry name" value="NEUROPATHY TARGET ESTERASE/SWISS CHEESE D.MELANOGASTER"/>
    <property type="match status" value="1"/>
</dbReference>
<dbReference type="Pfam" id="PF00027">
    <property type="entry name" value="cNMP_binding"/>
    <property type="match status" value="1"/>
</dbReference>
<dbReference type="Pfam" id="PF24179">
    <property type="entry name" value="NTE_Ploop"/>
    <property type="match status" value="1"/>
</dbReference>
<dbReference type="Pfam" id="PF01734">
    <property type="entry name" value="Patatin"/>
    <property type="match status" value="1"/>
</dbReference>
<dbReference type="SMART" id="SM00100">
    <property type="entry name" value="cNMP"/>
    <property type="match status" value="1"/>
</dbReference>
<dbReference type="SUPFAM" id="SSF51206">
    <property type="entry name" value="cAMP-binding domain-like"/>
    <property type="match status" value="3"/>
</dbReference>
<dbReference type="SUPFAM" id="SSF52151">
    <property type="entry name" value="FabD/lysophospholipase-like"/>
    <property type="match status" value="1"/>
</dbReference>
<dbReference type="PROSITE" id="PS50042">
    <property type="entry name" value="CNMP_BINDING_3"/>
    <property type="match status" value="2"/>
</dbReference>
<dbReference type="PROSITE" id="PS51635">
    <property type="entry name" value="PNPLA"/>
    <property type="match status" value="1"/>
</dbReference>
<dbReference type="PROSITE" id="PS01237">
    <property type="entry name" value="UPF0028"/>
    <property type="match status" value="1"/>
</dbReference>
<organism>
    <name type="scientific">Coccidioides immitis (strain RS)</name>
    <name type="common">Valley fever fungus</name>
    <dbReference type="NCBI Taxonomy" id="246410"/>
    <lineage>
        <taxon>Eukaryota</taxon>
        <taxon>Fungi</taxon>
        <taxon>Dikarya</taxon>
        <taxon>Ascomycota</taxon>
        <taxon>Pezizomycotina</taxon>
        <taxon>Eurotiomycetes</taxon>
        <taxon>Eurotiomycetidae</taxon>
        <taxon>Onygenales</taxon>
        <taxon>Onygenaceae</taxon>
        <taxon>Coccidioides</taxon>
    </lineage>
</organism>
<accession>Q1DLC7</accession>
<accession>J3K1S9</accession>
<feature type="chain" id="PRO_0000295317" description="Lysophospholipase NTE1">
    <location>
        <begin position="1"/>
        <end position="1575"/>
    </location>
</feature>
<feature type="topological domain" description="Cytoplasmic" evidence="1">
    <location>
        <begin position="1"/>
        <end position="99"/>
    </location>
</feature>
<feature type="transmembrane region" description="Helical" evidence="2">
    <location>
        <begin position="100"/>
        <end position="120"/>
    </location>
</feature>
<feature type="topological domain" description="Lumenal" evidence="1">
    <location>
        <begin position="121"/>
        <end position="151"/>
    </location>
</feature>
<feature type="transmembrane region" description="Helical" evidence="2">
    <location>
        <begin position="152"/>
        <end position="172"/>
    </location>
</feature>
<feature type="topological domain" description="Cytoplasmic" evidence="1">
    <location>
        <begin position="173"/>
        <end position="1575"/>
    </location>
</feature>
<feature type="domain" description="PNPLA" evidence="3">
    <location>
        <begin position="1272"/>
        <end position="1436"/>
    </location>
</feature>
<feature type="region of interest" description="Disordered" evidence="4">
    <location>
        <begin position="1"/>
        <end position="56"/>
    </location>
</feature>
<feature type="region of interest" description="Disordered" evidence="4">
    <location>
        <begin position="339"/>
        <end position="425"/>
    </location>
</feature>
<feature type="region of interest" description="Disordered" evidence="4">
    <location>
        <begin position="568"/>
        <end position="587"/>
    </location>
</feature>
<feature type="short sequence motif" description="GXGXXG" evidence="3">
    <location>
        <begin position="1276"/>
        <end position="1281"/>
    </location>
</feature>
<feature type="short sequence motif" description="GXSXG" evidence="3">
    <location>
        <begin position="1303"/>
        <end position="1307"/>
    </location>
</feature>
<feature type="short sequence motif" description="DGA/G" evidence="3">
    <location>
        <begin position="1423"/>
        <end position="1425"/>
    </location>
</feature>
<feature type="compositionally biased region" description="Low complexity" evidence="4">
    <location>
        <begin position="19"/>
        <end position="48"/>
    </location>
</feature>
<feature type="compositionally biased region" description="Basic residues" evidence="4">
    <location>
        <begin position="409"/>
        <end position="424"/>
    </location>
</feature>
<feature type="active site" description="Nucleophile" evidence="3">
    <location>
        <position position="1305"/>
    </location>
</feature>
<feature type="active site" description="Proton acceptor" evidence="3">
    <location>
        <position position="1423"/>
    </location>
</feature>
<feature type="binding site">
    <location>
        <begin position="737"/>
        <end position="856"/>
    </location>
    <ligand>
        <name>a nucleoside 3',5'-cyclic phosphate</name>
        <dbReference type="ChEBI" id="CHEBI:58464"/>
        <label>1</label>
    </ligand>
</feature>
<feature type="binding site">
    <location>
        <begin position="894"/>
        <end position="1014"/>
    </location>
    <ligand>
        <name>a nucleoside 3',5'-cyclic phosphate</name>
        <dbReference type="ChEBI" id="CHEBI:58464"/>
        <label>2</label>
    </ligand>
</feature>